<protein>
    <recommendedName>
        <fullName evidence="1">Probable transcriptional regulatory protein CHU_3516</fullName>
    </recommendedName>
</protein>
<sequence>MGRAYELRKGRRAKRFDRMAKAFTRLGKEIVMAAKQGGGNIETNSRLRTAVNNAKSVNMPKDRIDAAIKRASGKDESDYEEVVFEGYGPYGIAILVECATDNNTRTVANVRSYFTRSGGALGKTGSLEFLFERKGVIKIDGTGLDPEELELELIDFGAEEIVKDGNEIFIYTAFVDFGTMLKELEQRNITVINAETERIPNTTTTLTTEQQEEIYKLLEKFEDDDDVQAVFHNMAETE</sequence>
<gene>
    <name type="ordered locus">CHU_3516</name>
</gene>
<reference key="1">
    <citation type="journal article" date="2007" name="Appl. Environ. Microbiol.">
        <title>Genome sequence of the cellulolytic gliding bacterium Cytophaga hutchinsonii.</title>
        <authorList>
            <person name="Xie G."/>
            <person name="Bruce D.C."/>
            <person name="Challacombe J.F."/>
            <person name="Chertkov O."/>
            <person name="Detter J.C."/>
            <person name="Gilna P."/>
            <person name="Han C.S."/>
            <person name="Lucas S."/>
            <person name="Misra M."/>
            <person name="Myers G.L."/>
            <person name="Richardson P."/>
            <person name="Tapia R."/>
            <person name="Thayer N."/>
            <person name="Thompson L.S."/>
            <person name="Brettin T.S."/>
            <person name="Henrissat B."/>
            <person name="Wilson D.B."/>
            <person name="McBride M.J."/>
        </authorList>
    </citation>
    <scope>NUCLEOTIDE SEQUENCE [LARGE SCALE GENOMIC DNA]</scope>
    <source>
        <strain>ATCC 33406 / DSM 1761 / JCM 20678 / CIP 103989 / IAM 12607 / NBRC 15051 / NCIMB 9469 / D465</strain>
    </source>
</reference>
<comment type="subcellular location">
    <subcellularLocation>
        <location evidence="1">Cytoplasm</location>
    </subcellularLocation>
</comment>
<comment type="similarity">
    <text evidence="1">Belongs to the TACO1 family.</text>
</comment>
<dbReference type="EMBL" id="CP000383">
    <property type="protein sequence ID" value="ABG60749.1"/>
    <property type="molecule type" value="Genomic_DNA"/>
</dbReference>
<dbReference type="RefSeq" id="WP_011586856.1">
    <property type="nucleotide sequence ID" value="NC_008255.1"/>
</dbReference>
<dbReference type="SMR" id="Q11PB4"/>
<dbReference type="STRING" id="269798.CHU_3516"/>
<dbReference type="KEGG" id="chu:CHU_3516"/>
<dbReference type="eggNOG" id="COG0217">
    <property type="taxonomic scope" value="Bacteria"/>
</dbReference>
<dbReference type="HOGENOM" id="CLU_062974_3_0_10"/>
<dbReference type="OrthoDB" id="9781053at2"/>
<dbReference type="Proteomes" id="UP000001822">
    <property type="component" value="Chromosome"/>
</dbReference>
<dbReference type="GO" id="GO:0005829">
    <property type="term" value="C:cytosol"/>
    <property type="evidence" value="ECO:0007669"/>
    <property type="project" value="TreeGrafter"/>
</dbReference>
<dbReference type="GO" id="GO:0003677">
    <property type="term" value="F:DNA binding"/>
    <property type="evidence" value="ECO:0007669"/>
    <property type="project" value="UniProtKB-UniRule"/>
</dbReference>
<dbReference type="GO" id="GO:0006355">
    <property type="term" value="P:regulation of DNA-templated transcription"/>
    <property type="evidence" value="ECO:0007669"/>
    <property type="project" value="UniProtKB-UniRule"/>
</dbReference>
<dbReference type="FunFam" id="1.10.10.200:FF:000004">
    <property type="entry name" value="Probable transcriptional regulatory protein BSBG_02618"/>
    <property type="match status" value="1"/>
</dbReference>
<dbReference type="Gene3D" id="1.10.10.200">
    <property type="match status" value="1"/>
</dbReference>
<dbReference type="Gene3D" id="3.30.70.980">
    <property type="match status" value="2"/>
</dbReference>
<dbReference type="HAMAP" id="MF_00693">
    <property type="entry name" value="Transcrip_reg_TACO1"/>
    <property type="match status" value="1"/>
</dbReference>
<dbReference type="InterPro" id="IPR017856">
    <property type="entry name" value="Integrase-like_N"/>
</dbReference>
<dbReference type="InterPro" id="IPR048300">
    <property type="entry name" value="TACO1_YebC-like_2nd/3rd_dom"/>
</dbReference>
<dbReference type="InterPro" id="IPR049083">
    <property type="entry name" value="TACO1_YebC_N"/>
</dbReference>
<dbReference type="InterPro" id="IPR002876">
    <property type="entry name" value="Transcrip_reg_TACO1-like"/>
</dbReference>
<dbReference type="InterPro" id="IPR026564">
    <property type="entry name" value="Transcrip_reg_TACO1-like_dom3"/>
</dbReference>
<dbReference type="InterPro" id="IPR029072">
    <property type="entry name" value="YebC-like"/>
</dbReference>
<dbReference type="NCBIfam" id="NF001030">
    <property type="entry name" value="PRK00110.1"/>
    <property type="match status" value="1"/>
</dbReference>
<dbReference type="NCBIfam" id="NF009044">
    <property type="entry name" value="PRK12378.1"/>
    <property type="match status" value="1"/>
</dbReference>
<dbReference type="NCBIfam" id="TIGR01033">
    <property type="entry name" value="YebC/PmpR family DNA-binding transcriptional regulator"/>
    <property type="match status" value="1"/>
</dbReference>
<dbReference type="PANTHER" id="PTHR12532:SF6">
    <property type="entry name" value="TRANSCRIPTIONAL REGULATORY PROTEIN YEBC-RELATED"/>
    <property type="match status" value="1"/>
</dbReference>
<dbReference type="PANTHER" id="PTHR12532">
    <property type="entry name" value="TRANSLATIONAL ACTIVATOR OF CYTOCHROME C OXIDASE 1"/>
    <property type="match status" value="1"/>
</dbReference>
<dbReference type="Pfam" id="PF20772">
    <property type="entry name" value="TACO1_YebC_N"/>
    <property type="match status" value="1"/>
</dbReference>
<dbReference type="Pfam" id="PF01709">
    <property type="entry name" value="Transcrip_reg"/>
    <property type="match status" value="1"/>
</dbReference>
<dbReference type="SUPFAM" id="SSF75625">
    <property type="entry name" value="YebC-like"/>
    <property type="match status" value="1"/>
</dbReference>
<evidence type="ECO:0000255" key="1">
    <source>
        <dbReference type="HAMAP-Rule" id="MF_00693"/>
    </source>
</evidence>
<accession>Q11PB4</accession>
<proteinExistence type="inferred from homology"/>
<organism>
    <name type="scientific">Cytophaga hutchinsonii (strain ATCC 33406 / DSM 1761 / CIP 103989 / NBRC 15051 / NCIMB 9469 / D465)</name>
    <dbReference type="NCBI Taxonomy" id="269798"/>
    <lineage>
        <taxon>Bacteria</taxon>
        <taxon>Pseudomonadati</taxon>
        <taxon>Bacteroidota</taxon>
        <taxon>Cytophagia</taxon>
        <taxon>Cytophagales</taxon>
        <taxon>Cytophagaceae</taxon>
        <taxon>Cytophaga</taxon>
    </lineage>
</organism>
<name>Y3516_CYTH3</name>
<feature type="chain" id="PRO_0000257053" description="Probable transcriptional regulatory protein CHU_3516">
    <location>
        <begin position="1"/>
        <end position="238"/>
    </location>
</feature>
<keyword id="KW-0963">Cytoplasm</keyword>
<keyword id="KW-0238">DNA-binding</keyword>
<keyword id="KW-1185">Reference proteome</keyword>
<keyword id="KW-0804">Transcription</keyword>
<keyword id="KW-0805">Transcription regulation</keyword>